<sequence>MPVHEIRHPLIRHKLGLMRRADISTKNFRELAQEVGALLTYEATKDLPLEQYEIPGWAGPVTVEKISGKKITVVPILRAGIGMLDGVLSLIPGAKVSAVGVARNEETLEARTYLEKLAPDIAERRSLIIDPMLATGGSMVATIDLLKKAGSKEIRAMVLVAAPEGIEAVRKAHPDVIIYTASIDEKLDENGYIIPGLGDAGDKIFGTKQKEA</sequence>
<proteinExistence type="inferred from homology"/>
<accession>Q02G28</accession>
<organism>
    <name type="scientific">Pseudomonas aeruginosa (strain UCBPP-PA14)</name>
    <dbReference type="NCBI Taxonomy" id="208963"/>
    <lineage>
        <taxon>Bacteria</taxon>
        <taxon>Pseudomonadati</taxon>
        <taxon>Pseudomonadota</taxon>
        <taxon>Gammaproteobacteria</taxon>
        <taxon>Pseudomonadales</taxon>
        <taxon>Pseudomonadaceae</taxon>
        <taxon>Pseudomonas</taxon>
    </lineage>
</organism>
<keyword id="KW-0021">Allosteric enzyme</keyword>
<keyword id="KW-0328">Glycosyltransferase</keyword>
<keyword id="KW-0342">GTP-binding</keyword>
<keyword id="KW-0460">Magnesium</keyword>
<keyword id="KW-0547">Nucleotide-binding</keyword>
<keyword id="KW-0808">Transferase</keyword>
<protein>
    <recommendedName>
        <fullName evidence="1">Uracil phosphoribosyltransferase</fullName>
        <ecNumber evidence="1">2.4.2.9</ecNumber>
    </recommendedName>
    <alternativeName>
        <fullName evidence="1">UMP pyrophosphorylase</fullName>
    </alternativeName>
    <alternativeName>
        <fullName evidence="1">UPRTase</fullName>
    </alternativeName>
</protein>
<reference key="1">
    <citation type="journal article" date="2006" name="Genome Biol.">
        <title>Genomic analysis reveals that Pseudomonas aeruginosa virulence is combinatorial.</title>
        <authorList>
            <person name="Lee D.G."/>
            <person name="Urbach J.M."/>
            <person name="Wu G."/>
            <person name="Liberati N.T."/>
            <person name="Feinbaum R.L."/>
            <person name="Miyata S."/>
            <person name="Diggins L.T."/>
            <person name="He J."/>
            <person name="Saucier M."/>
            <person name="Deziel E."/>
            <person name="Friedman L."/>
            <person name="Li L."/>
            <person name="Grills G."/>
            <person name="Montgomery K."/>
            <person name="Kucherlapati R."/>
            <person name="Rahme L.G."/>
            <person name="Ausubel F.M."/>
        </authorList>
    </citation>
    <scope>NUCLEOTIDE SEQUENCE [LARGE SCALE GENOMIC DNA]</scope>
    <source>
        <strain>UCBPP-PA14</strain>
    </source>
</reference>
<dbReference type="EC" id="2.4.2.9" evidence="1"/>
<dbReference type="EMBL" id="CP000438">
    <property type="protein sequence ID" value="ABJ14027.1"/>
    <property type="molecule type" value="Genomic_DNA"/>
</dbReference>
<dbReference type="RefSeq" id="WP_003094968.1">
    <property type="nucleotide sequence ID" value="NZ_CP034244.1"/>
</dbReference>
<dbReference type="SMR" id="Q02G28"/>
<dbReference type="KEGG" id="pau:PA14_61470"/>
<dbReference type="PseudoCAP" id="PA14_61470"/>
<dbReference type="HOGENOM" id="CLU_067096_2_2_6"/>
<dbReference type="BioCyc" id="PAER208963:G1G74-5197-MONOMER"/>
<dbReference type="UniPathway" id="UPA00574">
    <property type="reaction ID" value="UER00636"/>
</dbReference>
<dbReference type="Proteomes" id="UP000000653">
    <property type="component" value="Chromosome"/>
</dbReference>
<dbReference type="GO" id="GO:0005525">
    <property type="term" value="F:GTP binding"/>
    <property type="evidence" value="ECO:0007669"/>
    <property type="project" value="UniProtKB-KW"/>
</dbReference>
<dbReference type="GO" id="GO:0000287">
    <property type="term" value="F:magnesium ion binding"/>
    <property type="evidence" value="ECO:0007669"/>
    <property type="project" value="UniProtKB-UniRule"/>
</dbReference>
<dbReference type="GO" id="GO:0004845">
    <property type="term" value="F:uracil phosphoribosyltransferase activity"/>
    <property type="evidence" value="ECO:0007669"/>
    <property type="project" value="UniProtKB-UniRule"/>
</dbReference>
<dbReference type="GO" id="GO:0044206">
    <property type="term" value="P:UMP salvage"/>
    <property type="evidence" value="ECO:0007669"/>
    <property type="project" value="UniProtKB-UniRule"/>
</dbReference>
<dbReference type="GO" id="GO:0006223">
    <property type="term" value="P:uracil salvage"/>
    <property type="evidence" value="ECO:0007669"/>
    <property type="project" value="InterPro"/>
</dbReference>
<dbReference type="CDD" id="cd06223">
    <property type="entry name" value="PRTases_typeI"/>
    <property type="match status" value="1"/>
</dbReference>
<dbReference type="FunFam" id="3.40.50.2020:FF:000003">
    <property type="entry name" value="Uracil phosphoribosyltransferase"/>
    <property type="match status" value="1"/>
</dbReference>
<dbReference type="Gene3D" id="3.40.50.2020">
    <property type="match status" value="1"/>
</dbReference>
<dbReference type="HAMAP" id="MF_01218_B">
    <property type="entry name" value="Upp_B"/>
    <property type="match status" value="1"/>
</dbReference>
<dbReference type="InterPro" id="IPR000836">
    <property type="entry name" value="PRibTrfase_dom"/>
</dbReference>
<dbReference type="InterPro" id="IPR029057">
    <property type="entry name" value="PRTase-like"/>
</dbReference>
<dbReference type="InterPro" id="IPR034332">
    <property type="entry name" value="Upp_B"/>
</dbReference>
<dbReference type="InterPro" id="IPR050054">
    <property type="entry name" value="UPRTase/APRTase"/>
</dbReference>
<dbReference type="InterPro" id="IPR005765">
    <property type="entry name" value="Ura_phspho_trans"/>
</dbReference>
<dbReference type="NCBIfam" id="NF001097">
    <property type="entry name" value="PRK00129.1"/>
    <property type="match status" value="1"/>
</dbReference>
<dbReference type="NCBIfam" id="TIGR01091">
    <property type="entry name" value="upp"/>
    <property type="match status" value="1"/>
</dbReference>
<dbReference type="PANTHER" id="PTHR32315">
    <property type="entry name" value="ADENINE PHOSPHORIBOSYLTRANSFERASE"/>
    <property type="match status" value="1"/>
</dbReference>
<dbReference type="PANTHER" id="PTHR32315:SF4">
    <property type="entry name" value="URACIL PHOSPHORIBOSYLTRANSFERASE, CHLOROPLASTIC"/>
    <property type="match status" value="1"/>
</dbReference>
<dbReference type="Pfam" id="PF14681">
    <property type="entry name" value="UPRTase"/>
    <property type="match status" value="1"/>
</dbReference>
<dbReference type="SUPFAM" id="SSF53271">
    <property type="entry name" value="PRTase-like"/>
    <property type="match status" value="1"/>
</dbReference>
<feature type="chain" id="PRO_1000053760" description="Uracil phosphoribosyltransferase">
    <location>
        <begin position="1"/>
        <end position="212"/>
    </location>
</feature>
<feature type="binding site" evidence="1">
    <location>
        <position position="78"/>
    </location>
    <ligand>
        <name>5-phospho-alpha-D-ribose 1-diphosphate</name>
        <dbReference type="ChEBI" id="CHEBI:58017"/>
    </ligand>
</feature>
<feature type="binding site" evidence="1">
    <location>
        <position position="103"/>
    </location>
    <ligand>
        <name>5-phospho-alpha-D-ribose 1-diphosphate</name>
        <dbReference type="ChEBI" id="CHEBI:58017"/>
    </ligand>
</feature>
<feature type="binding site" evidence="1">
    <location>
        <begin position="130"/>
        <end position="138"/>
    </location>
    <ligand>
        <name>5-phospho-alpha-D-ribose 1-diphosphate</name>
        <dbReference type="ChEBI" id="CHEBI:58017"/>
    </ligand>
</feature>
<feature type="binding site" evidence="1">
    <location>
        <position position="193"/>
    </location>
    <ligand>
        <name>uracil</name>
        <dbReference type="ChEBI" id="CHEBI:17568"/>
    </ligand>
</feature>
<feature type="binding site" evidence="1">
    <location>
        <begin position="198"/>
        <end position="200"/>
    </location>
    <ligand>
        <name>uracil</name>
        <dbReference type="ChEBI" id="CHEBI:17568"/>
    </ligand>
</feature>
<feature type="binding site" evidence="1">
    <location>
        <position position="199"/>
    </location>
    <ligand>
        <name>5-phospho-alpha-D-ribose 1-diphosphate</name>
        <dbReference type="ChEBI" id="CHEBI:58017"/>
    </ligand>
</feature>
<name>UPP_PSEAB</name>
<evidence type="ECO:0000255" key="1">
    <source>
        <dbReference type="HAMAP-Rule" id="MF_01218"/>
    </source>
</evidence>
<comment type="function">
    <text evidence="1">Catalyzes the conversion of uracil and 5-phospho-alpha-D-ribose 1-diphosphate (PRPP) to UMP and diphosphate.</text>
</comment>
<comment type="catalytic activity">
    <reaction evidence="1">
        <text>UMP + diphosphate = 5-phospho-alpha-D-ribose 1-diphosphate + uracil</text>
        <dbReference type="Rhea" id="RHEA:13017"/>
        <dbReference type="ChEBI" id="CHEBI:17568"/>
        <dbReference type="ChEBI" id="CHEBI:33019"/>
        <dbReference type="ChEBI" id="CHEBI:57865"/>
        <dbReference type="ChEBI" id="CHEBI:58017"/>
        <dbReference type="EC" id="2.4.2.9"/>
    </reaction>
</comment>
<comment type="cofactor">
    <cofactor evidence="1">
        <name>Mg(2+)</name>
        <dbReference type="ChEBI" id="CHEBI:18420"/>
    </cofactor>
    <text evidence="1">Binds 1 Mg(2+) ion per subunit. The magnesium is bound as Mg-PRPP.</text>
</comment>
<comment type="activity regulation">
    <text evidence="1">Allosterically activated by GTP.</text>
</comment>
<comment type="pathway">
    <text evidence="1">Pyrimidine metabolism; UMP biosynthesis via salvage pathway; UMP from uracil: step 1/1.</text>
</comment>
<comment type="similarity">
    <text evidence="1">Belongs to the UPRTase family.</text>
</comment>
<gene>
    <name evidence="1" type="primary">upp</name>
    <name type="ordered locus">PA14_61470</name>
</gene>